<comment type="function">
    <text evidence="1">Catalyzes the reversible hydration of cis-homoaconitate to (2R,3S)-homoisocitrate, a step in the alpha-aminoadipate pathway for lysine biosynthesis.</text>
</comment>
<comment type="catalytic activity">
    <reaction>
        <text>(2R,3S)-homoisocitrate = cis-homoaconitate + H2O</text>
        <dbReference type="Rhea" id="RHEA:15485"/>
        <dbReference type="ChEBI" id="CHEBI:15377"/>
        <dbReference type="ChEBI" id="CHEBI:15404"/>
        <dbReference type="ChEBI" id="CHEBI:58174"/>
        <dbReference type="EC" id="4.2.1.36"/>
    </reaction>
</comment>
<comment type="cofactor">
    <cofactor evidence="1">
        <name>[4Fe-4S] cluster</name>
        <dbReference type="ChEBI" id="CHEBI:49883"/>
    </cofactor>
    <text evidence="1">Binds 1 [4Fe-4S] cluster per subunit.</text>
</comment>
<comment type="pathway">
    <text>Amino-acid biosynthesis; L-lysine biosynthesis via AAA pathway; L-alpha-aminoadipate from 2-oxoglutarate: step 3/5.</text>
</comment>
<comment type="subcellular location">
    <subcellularLocation>
        <location evidence="1">Mitochondrion</location>
    </subcellularLocation>
</comment>
<comment type="similarity">
    <text evidence="3">Belongs to the aconitase/IPM isomerase family.</text>
</comment>
<protein>
    <recommendedName>
        <fullName>Homoaconitase, mitochondrial</fullName>
        <ecNumber>4.2.1.36</ecNumber>
    </recommendedName>
    <alternativeName>
        <fullName>Homoaconitate hydratase</fullName>
    </alternativeName>
</protein>
<reference key="1">
    <citation type="journal article" date="2005" name="Science">
        <title>The genome of the basidiomycetous yeast and human pathogen Cryptococcus neoformans.</title>
        <authorList>
            <person name="Loftus B.J."/>
            <person name="Fung E."/>
            <person name="Roncaglia P."/>
            <person name="Rowley D."/>
            <person name="Amedeo P."/>
            <person name="Bruno D."/>
            <person name="Vamathevan J."/>
            <person name="Miranda M."/>
            <person name="Anderson I.J."/>
            <person name="Fraser J.A."/>
            <person name="Allen J.E."/>
            <person name="Bosdet I.E."/>
            <person name="Brent M.R."/>
            <person name="Chiu R."/>
            <person name="Doering T.L."/>
            <person name="Donlin M.J."/>
            <person name="D'Souza C.A."/>
            <person name="Fox D.S."/>
            <person name="Grinberg V."/>
            <person name="Fu J."/>
            <person name="Fukushima M."/>
            <person name="Haas B.J."/>
            <person name="Huang J.C."/>
            <person name="Janbon G."/>
            <person name="Jones S.J.M."/>
            <person name="Koo H.L."/>
            <person name="Krzywinski M.I."/>
            <person name="Kwon-Chung K.J."/>
            <person name="Lengeler K.B."/>
            <person name="Maiti R."/>
            <person name="Marra M.A."/>
            <person name="Marra R.E."/>
            <person name="Mathewson C.A."/>
            <person name="Mitchell T.G."/>
            <person name="Pertea M."/>
            <person name="Riggs F.R."/>
            <person name="Salzberg S.L."/>
            <person name="Schein J.E."/>
            <person name="Shvartsbeyn A."/>
            <person name="Shin H."/>
            <person name="Shumway M."/>
            <person name="Specht C.A."/>
            <person name="Suh B.B."/>
            <person name="Tenney A."/>
            <person name="Utterback T.R."/>
            <person name="Wickes B.L."/>
            <person name="Wortman J.R."/>
            <person name="Wye N.H."/>
            <person name="Kronstad J.W."/>
            <person name="Lodge J.K."/>
            <person name="Heitman J."/>
            <person name="Davis R.W."/>
            <person name="Fraser C.M."/>
            <person name="Hyman R.W."/>
        </authorList>
    </citation>
    <scope>NUCLEOTIDE SEQUENCE [LARGE SCALE GENOMIC DNA]</scope>
    <source>
        <strain>B-3501A</strain>
    </source>
</reference>
<name>LYS4_CRYNB</name>
<proteinExistence type="inferred from homology"/>
<feature type="transit peptide" description="Mitochondrion" evidence="2">
    <location>
        <begin position="1"/>
        <end position="24"/>
    </location>
</feature>
<feature type="chain" id="PRO_0000410002" description="Homoaconitase, mitochondrial">
    <location>
        <begin position="25"/>
        <end position="728"/>
    </location>
</feature>
<feature type="binding site" evidence="1">
    <location>
        <position position="362"/>
    </location>
    <ligand>
        <name>[4Fe-4S] cluster</name>
        <dbReference type="ChEBI" id="CHEBI:49883"/>
    </ligand>
</feature>
<feature type="binding site" evidence="1">
    <location>
        <position position="422"/>
    </location>
    <ligand>
        <name>[4Fe-4S] cluster</name>
        <dbReference type="ChEBI" id="CHEBI:49883"/>
    </ligand>
</feature>
<feature type="binding site" evidence="1">
    <location>
        <position position="425"/>
    </location>
    <ligand>
        <name>[4Fe-4S] cluster</name>
        <dbReference type="ChEBI" id="CHEBI:49883"/>
    </ligand>
</feature>
<evidence type="ECO:0000250" key="1"/>
<evidence type="ECO:0000255" key="2"/>
<evidence type="ECO:0000305" key="3"/>
<gene>
    <name type="primary">LYS4</name>
    <name type="ordered locus">CNBK2910</name>
</gene>
<dbReference type="EC" id="4.2.1.36"/>
<dbReference type="EMBL" id="AAEY01000052">
    <property type="protein sequence ID" value="EAL18273.1"/>
    <property type="molecule type" value="Genomic_DNA"/>
</dbReference>
<dbReference type="RefSeq" id="XP_772920.1">
    <property type="nucleotide sequence ID" value="XM_767827.1"/>
</dbReference>
<dbReference type="SMR" id="P0CM03"/>
<dbReference type="GeneID" id="4938991"/>
<dbReference type="KEGG" id="cnb:CNBK2910"/>
<dbReference type="VEuPathDB" id="FungiDB:CNBK2910"/>
<dbReference type="HOGENOM" id="CLU_006714_3_1_1"/>
<dbReference type="OrthoDB" id="3027at5206"/>
<dbReference type="UniPathway" id="UPA00033">
    <property type="reaction ID" value="UER01027"/>
</dbReference>
<dbReference type="GO" id="GO:0005759">
    <property type="term" value="C:mitochondrial matrix"/>
    <property type="evidence" value="ECO:0007669"/>
    <property type="project" value="EnsemblFungi"/>
</dbReference>
<dbReference type="GO" id="GO:0051539">
    <property type="term" value="F:4 iron, 4 sulfur cluster binding"/>
    <property type="evidence" value="ECO:0007669"/>
    <property type="project" value="InterPro"/>
</dbReference>
<dbReference type="GO" id="GO:0004409">
    <property type="term" value="F:homoaconitate hydratase activity"/>
    <property type="evidence" value="ECO:0007669"/>
    <property type="project" value="UniProtKB-EC"/>
</dbReference>
<dbReference type="GO" id="GO:0046872">
    <property type="term" value="F:metal ion binding"/>
    <property type="evidence" value="ECO:0007669"/>
    <property type="project" value="UniProtKB-KW"/>
</dbReference>
<dbReference type="GO" id="GO:0019878">
    <property type="term" value="P:lysine biosynthetic process via aminoadipic acid"/>
    <property type="evidence" value="ECO:0007669"/>
    <property type="project" value="UniProtKB-UniPathway"/>
</dbReference>
<dbReference type="Gene3D" id="3.30.499.10">
    <property type="entry name" value="Aconitase, domain 3"/>
    <property type="match status" value="2"/>
</dbReference>
<dbReference type="Gene3D" id="3.20.19.10">
    <property type="entry name" value="Aconitase, domain 4"/>
    <property type="match status" value="1"/>
</dbReference>
<dbReference type="InterPro" id="IPR015931">
    <property type="entry name" value="Acnase/IPM_dHydase_lsu_aba_1/3"/>
</dbReference>
<dbReference type="InterPro" id="IPR001030">
    <property type="entry name" value="Acoase/IPM_deHydtase_lsu_aba"/>
</dbReference>
<dbReference type="InterPro" id="IPR015928">
    <property type="entry name" value="Aconitase/3IPM_dehydase_swvl"/>
</dbReference>
<dbReference type="InterPro" id="IPR018136">
    <property type="entry name" value="Aconitase_4Fe-4S_BS"/>
</dbReference>
<dbReference type="InterPro" id="IPR036008">
    <property type="entry name" value="Aconitase_4Fe-4S_dom"/>
</dbReference>
<dbReference type="InterPro" id="IPR000573">
    <property type="entry name" value="AconitaseA/IPMdHydase_ssu_swvl"/>
</dbReference>
<dbReference type="InterPro" id="IPR004418">
    <property type="entry name" value="Homoaconitase_mito"/>
</dbReference>
<dbReference type="InterPro" id="IPR050067">
    <property type="entry name" value="IPM_dehydratase_rel_enz"/>
</dbReference>
<dbReference type="NCBIfam" id="TIGR00139">
    <property type="entry name" value="h_aconitase"/>
    <property type="match status" value="1"/>
</dbReference>
<dbReference type="PANTHER" id="PTHR43822:SF2">
    <property type="entry name" value="HOMOACONITASE, MITOCHONDRIAL"/>
    <property type="match status" value="1"/>
</dbReference>
<dbReference type="PANTHER" id="PTHR43822">
    <property type="entry name" value="HOMOACONITASE, MITOCHONDRIAL-RELATED"/>
    <property type="match status" value="1"/>
</dbReference>
<dbReference type="Pfam" id="PF00330">
    <property type="entry name" value="Aconitase"/>
    <property type="match status" value="1"/>
</dbReference>
<dbReference type="Pfam" id="PF00694">
    <property type="entry name" value="Aconitase_C"/>
    <property type="match status" value="1"/>
</dbReference>
<dbReference type="PRINTS" id="PR00415">
    <property type="entry name" value="ACONITASE"/>
</dbReference>
<dbReference type="SUPFAM" id="SSF53732">
    <property type="entry name" value="Aconitase iron-sulfur domain"/>
    <property type="match status" value="1"/>
</dbReference>
<dbReference type="SUPFAM" id="SSF52016">
    <property type="entry name" value="LeuD/IlvD-like"/>
    <property type="match status" value="1"/>
</dbReference>
<dbReference type="PROSITE" id="PS00450">
    <property type="entry name" value="ACONITASE_1"/>
    <property type="match status" value="1"/>
</dbReference>
<dbReference type="PROSITE" id="PS01244">
    <property type="entry name" value="ACONITASE_2"/>
    <property type="match status" value="1"/>
</dbReference>
<accession>P0CM03</accession>
<accession>Q55JP2</accession>
<accession>Q5K9V9</accession>
<keyword id="KW-0028">Amino-acid biosynthesis</keyword>
<keyword id="KW-0408">Iron</keyword>
<keyword id="KW-0411">Iron-sulfur</keyword>
<keyword id="KW-0456">Lyase</keyword>
<keyword id="KW-0457">Lysine biosynthesis</keyword>
<keyword id="KW-0479">Metal-binding</keyword>
<keyword id="KW-0496">Mitochondrion</keyword>
<keyword id="KW-0809">Transit peptide</keyword>
<organism>
    <name type="scientific">Cryptococcus neoformans var. neoformans serotype D (strain B-3501A)</name>
    <name type="common">Filobasidiella neoformans</name>
    <dbReference type="NCBI Taxonomy" id="283643"/>
    <lineage>
        <taxon>Eukaryota</taxon>
        <taxon>Fungi</taxon>
        <taxon>Dikarya</taxon>
        <taxon>Basidiomycota</taxon>
        <taxon>Agaricomycotina</taxon>
        <taxon>Tremellomycetes</taxon>
        <taxon>Tremellales</taxon>
        <taxon>Cryptococcaceae</taxon>
        <taxon>Cryptococcus</taxon>
        <taxon>Cryptococcus neoformans species complex</taxon>
    </lineage>
</organism>
<sequence length="728" mass="77886">MVAIPRLARLSVPAWALSARGRFYATVSTPQTLVEKIVQKYAVGLSEGVKVRAGDYVMIKPEHVMTHDNTGPVISKFLSLSCSKLDNPRQPVFALDHDVQNQSETNQKKYKKIQAFAKEHGVDFYPAGRGIGHQIIVEEGYAWPGKMVVASDSHSNHYGGVGCLGTAIVRTDAAGIWATGKFWWQIPRIVSVSLDGRLSPGVTGKDVIVALAGLFNKDEVLNAAIEFTGSGVEHLSIDERLTIANMTTEWGAVAGVFPVDDKLKEWYQGILRKAELRKFISPTVPSTVGAKVHPRLNAARLDDAMTNRVVADPGAHYAARLSLDLSTLVPHVSGPNSVKVATALPKLLDPPIPINKAYLVSCTNSRASDIASAAQVLRGKKVAPGVEFYIAAASSRVQEDAEAAGDWQTLIDAGAKTLPAGCGPCIGLGVGLLEKGEVGISATNRNYKGRMGSPDAIAYLASPAVVAASAAKGVICGPESMDLSQLPQYEQPKFSIIKEGAAGEEKPVEVDEASLEPLLEGFPAYFEGPLLFAPQDNLTTDGMYPGKYTYQDDITPERQAEVVMENYDPTFAATARELRTALPTASSPSTLPGAILLSGYNFGTGSSREQAATAIKNAGIPLVICGSFGDIFKRNSINNGLILIESPSLIKDMTERFAKDGVRNKGGKDGKLTVVPEGWRIKVDSQRGLVTVNMGEEEEKTYPAAKVGRSVQELWVNGGLEGFIRASL</sequence>